<dbReference type="EMBL" id="AJ302068">
    <property type="protein sequence ID" value="CAC35727.1"/>
    <property type="molecule type" value="Genomic_DNA"/>
</dbReference>
<dbReference type="EMBL" id="AK093488">
    <property type="protein sequence ID" value="BAG52728.1"/>
    <property type="molecule type" value="mRNA"/>
</dbReference>
<dbReference type="EMBL" id="CH471152">
    <property type="protein sequence ID" value="EAW60804.1"/>
    <property type="molecule type" value="Genomic_DNA"/>
</dbReference>
<dbReference type="EMBL" id="BC093991">
    <property type="protein sequence ID" value="AAH93991.1"/>
    <property type="molecule type" value="mRNA"/>
</dbReference>
<dbReference type="EMBL" id="BC093993">
    <property type="protein sequence ID" value="AAH93993.1"/>
    <property type="molecule type" value="mRNA"/>
</dbReference>
<dbReference type="CCDS" id="CCDS11418.1"/>
<dbReference type="RefSeq" id="NP_149971.1">
    <property type="nucleotide sequence ID" value="NM_033194.3"/>
</dbReference>
<dbReference type="SMR" id="Q9BQS6"/>
<dbReference type="BioGRID" id="125108">
    <property type="interactions" value="25"/>
</dbReference>
<dbReference type="FunCoup" id="Q9BQS6">
    <property type="interactions" value="893"/>
</dbReference>
<dbReference type="IntAct" id="Q9BQS6">
    <property type="interactions" value="14"/>
</dbReference>
<dbReference type="STRING" id="9606.ENSP00000458018"/>
<dbReference type="PhosphoSitePlus" id="Q9BQS6"/>
<dbReference type="BioMuta" id="HSPB9"/>
<dbReference type="DMDM" id="46576635"/>
<dbReference type="MassIVE" id="Q9BQS6"/>
<dbReference type="PaxDb" id="9606-ENSP00000458018"/>
<dbReference type="Antibodypedia" id="59368">
    <property type="antibodies" value="93 antibodies from 22 providers"/>
</dbReference>
<dbReference type="DNASU" id="94086"/>
<dbReference type="Ensembl" id="ENST00000565659.2">
    <property type="protein sequence ID" value="ENSP00000458018.1"/>
    <property type="gene ID" value="ENSG00000260325.2"/>
</dbReference>
<dbReference type="GeneID" id="94086"/>
<dbReference type="KEGG" id="hsa:94086"/>
<dbReference type="MANE-Select" id="ENST00000565659.2">
    <property type="protein sequence ID" value="ENSP00000458018.1"/>
    <property type="RefSeq nucleotide sequence ID" value="NM_033194.3"/>
    <property type="RefSeq protein sequence ID" value="NP_149971.1"/>
</dbReference>
<dbReference type="UCSC" id="uc002hyy.3">
    <property type="organism name" value="human"/>
</dbReference>
<dbReference type="AGR" id="HGNC:30589"/>
<dbReference type="CTD" id="94086"/>
<dbReference type="DisGeNET" id="94086"/>
<dbReference type="GeneCards" id="HSPB9"/>
<dbReference type="HGNC" id="HGNC:30589">
    <property type="gene designation" value="HSPB9"/>
</dbReference>
<dbReference type="HPA" id="ENSG00000260325">
    <property type="expression patterns" value="Tissue enhanced (testis)"/>
</dbReference>
<dbReference type="MIM" id="608344">
    <property type="type" value="gene"/>
</dbReference>
<dbReference type="neXtProt" id="NX_Q9BQS6"/>
<dbReference type="OpenTargets" id="ENSG00000260325"/>
<dbReference type="PharmGKB" id="PA134875756"/>
<dbReference type="VEuPathDB" id="HostDB:ENSG00000260325"/>
<dbReference type="eggNOG" id="KOG3591">
    <property type="taxonomic scope" value="Eukaryota"/>
</dbReference>
<dbReference type="GeneTree" id="ENSGT00510000049735"/>
<dbReference type="HOGENOM" id="CLU_1585932_0_0_1"/>
<dbReference type="InParanoid" id="Q9BQS6"/>
<dbReference type="OMA" id="TAMTCCL"/>
<dbReference type="OrthoDB" id="8946669at2759"/>
<dbReference type="PAN-GO" id="Q9BQS6">
    <property type="GO annotations" value="2 GO annotations based on evolutionary models"/>
</dbReference>
<dbReference type="PhylomeDB" id="Q9BQS6"/>
<dbReference type="TreeFam" id="TF338684"/>
<dbReference type="PathwayCommons" id="Q9BQS6"/>
<dbReference type="SignaLink" id="Q9BQS6"/>
<dbReference type="BioGRID-ORCS" id="94086">
    <property type="hits" value="14 hits in 1140 CRISPR screens"/>
</dbReference>
<dbReference type="GenomeRNAi" id="94086"/>
<dbReference type="Pharos" id="Q9BQS6">
    <property type="development level" value="Tbio"/>
</dbReference>
<dbReference type="PRO" id="PR:Q9BQS6"/>
<dbReference type="Proteomes" id="UP000005640">
    <property type="component" value="Chromosome 17"/>
</dbReference>
<dbReference type="RNAct" id="Q9BQS6">
    <property type="molecule type" value="protein"/>
</dbReference>
<dbReference type="Bgee" id="ENSG00000260325">
    <property type="expression patterns" value="Expressed in left testis and 99 other cell types or tissues"/>
</dbReference>
<dbReference type="GO" id="GO:0005737">
    <property type="term" value="C:cytoplasm"/>
    <property type="evidence" value="ECO:0000314"/>
    <property type="project" value="UniProtKB"/>
</dbReference>
<dbReference type="GO" id="GO:0005829">
    <property type="term" value="C:cytosol"/>
    <property type="evidence" value="ECO:0000314"/>
    <property type="project" value="HPA"/>
</dbReference>
<dbReference type="GO" id="GO:0043231">
    <property type="term" value="C:intracellular membrane-bounded organelle"/>
    <property type="evidence" value="ECO:0000314"/>
    <property type="project" value="HPA"/>
</dbReference>
<dbReference type="GO" id="GO:0005654">
    <property type="term" value="C:nucleoplasm"/>
    <property type="evidence" value="ECO:0000314"/>
    <property type="project" value="HPA"/>
</dbReference>
<dbReference type="GO" id="GO:0005634">
    <property type="term" value="C:nucleus"/>
    <property type="evidence" value="ECO:0000314"/>
    <property type="project" value="UniProtKB"/>
</dbReference>
<dbReference type="CDD" id="cd06481">
    <property type="entry name" value="ACD_HspB9_like"/>
    <property type="match status" value="1"/>
</dbReference>
<dbReference type="FunFam" id="2.60.40.790:FF:000063">
    <property type="entry name" value="Heat shock protein beta-9"/>
    <property type="match status" value="1"/>
</dbReference>
<dbReference type="Gene3D" id="2.60.40.790">
    <property type="match status" value="1"/>
</dbReference>
<dbReference type="InterPro" id="IPR002068">
    <property type="entry name" value="A-crystallin/Hsp20_dom"/>
</dbReference>
<dbReference type="InterPro" id="IPR008978">
    <property type="entry name" value="HSP20-like_chaperone"/>
</dbReference>
<dbReference type="InterPro" id="IPR042940">
    <property type="entry name" value="HSPB9"/>
</dbReference>
<dbReference type="PANTHER" id="PTHR47896">
    <property type="entry name" value="HEAT SHOCK PROTEIN BETA-9"/>
    <property type="match status" value="1"/>
</dbReference>
<dbReference type="PANTHER" id="PTHR47896:SF1">
    <property type="entry name" value="HEAT SHOCK PROTEIN BETA-9"/>
    <property type="match status" value="1"/>
</dbReference>
<dbReference type="Pfam" id="PF00011">
    <property type="entry name" value="HSP20"/>
    <property type="match status" value="1"/>
</dbReference>
<dbReference type="SUPFAM" id="SSF49764">
    <property type="entry name" value="HSP20-like chaperones"/>
    <property type="match status" value="1"/>
</dbReference>
<dbReference type="PROSITE" id="PS01031">
    <property type="entry name" value="SHSP"/>
    <property type="match status" value="1"/>
</dbReference>
<organism>
    <name type="scientific">Homo sapiens</name>
    <name type="common">Human</name>
    <dbReference type="NCBI Taxonomy" id="9606"/>
    <lineage>
        <taxon>Eukaryota</taxon>
        <taxon>Metazoa</taxon>
        <taxon>Chordata</taxon>
        <taxon>Craniata</taxon>
        <taxon>Vertebrata</taxon>
        <taxon>Euteleostomi</taxon>
        <taxon>Mammalia</taxon>
        <taxon>Eutheria</taxon>
        <taxon>Euarchontoglires</taxon>
        <taxon>Primates</taxon>
        <taxon>Haplorrhini</taxon>
        <taxon>Catarrhini</taxon>
        <taxon>Hominidae</taxon>
        <taxon>Homo</taxon>
    </lineage>
</organism>
<evidence type="ECO:0000255" key="1">
    <source>
        <dbReference type="PROSITE-ProRule" id="PRU00285"/>
    </source>
</evidence>
<evidence type="ECO:0000269" key="2">
    <source>
    </source>
</evidence>
<evidence type="ECO:0000269" key="3">
    <source>
    </source>
</evidence>
<gene>
    <name type="primary">HSPB9</name>
</gene>
<proteinExistence type="evidence at protein level"/>
<reference key="1">
    <citation type="journal article" date="2001" name="Biochim. Biophys. Acta">
        <title>Characterization of two novel human small heat shock proteins: protein kinase-related HspB8 and testis-specific HspB9.</title>
        <authorList>
            <person name="Kappe G."/>
            <person name="Verschuure P."/>
            <person name="Philipsen R.L.A."/>
            <person name="Staalduinen A.A."/>
            <person name="Van de Boogaart P."/>
            <person name="Boelens W.C."/>
            <person name="de Jong W.W."/>
        </authorList>
    </citation>
    <scope>NUCLEOTIDE SEQUENCE [GENOMIC DNA]</scope>
    <scope>TISSUE SPECIFICITY</scope>
</reference>
<reference key="2">
    <citation type="journal article" date="2004" name="Nat. Genet.">
        <title>Complete sequencing and characterization of 21,243 full-length human cDNAs.</title>
        <authorList>
            <person name="Ota T."/>
            <person name="Suzuki Y."/>
            <person name="Nishikawa T."/>
            <person name="Otsuki T."/>
            <person name="Sugiyama T."/>
            <person name="Irie R."/>
            <person name="Wakamatsu A."/>
            <person name="Hayashi K."/>
            <person name="Sato H."/>
            <person name="Nagai K."/>
            <person name="Kimura K."/>
            <person name="Makita H."/>
            <person name="Sekine M."/>
            <person name="Obayashi M."/>
            <person name="Nishi T."/>
            <person name="Shibahara T."/>
            <person name="Tanaka T."/>
            <person name="Ishii S."/>
            <person name="Yamamoto J."/>
            <person name="Saito K."/>
            <person name="Kawai Y."/>
            <person name="Isono Y."/>
            <person name="Nakamura Y."/>
            <person name="Nagahari K."/>
            <person name="Murakami K."/>
            <person name="Yasuda T."/>
            <person name="Iwayanagi T."/>
            <person name="Wagatsuma M."/>
            <person name="Shiratori A."/>
            <person name="Sudo H."/>
            <person name="Hosoiri T."/>
            <person name="Kaku Y."/>
            <person name="Kodaira H."/>
            <person name="Kondo H."/>
            <person name="Sugawara M."/>
            <person name="Takahashi M."/>
            <person name="Kanda K."/>
            <person name="Yokoi T."/>
            <person name="Furuya T."/>
            <person name="Kikkawa E."/>
            <person name="Omura Y."/>
            <person name="Abe K."/>
            <person name="Kamihara K."/>
            <person name="Katsuta N."/>
            <person name="Sato K."/>
            <person name="Tanikawa M."/>
            <person name="Yamazaki M."/>
            <person name="Ninomiya K."/>
            <person name="Ishibashi T."/>
            <person name="Yamashita H."/>
            <person name="Murakawa K."/>
            <person name="Fujimori K."/>
            <person name="Tanai H."/>
            <person name="Kimata M."/>
            <person name="Watanabe M."/>
            <person name="Hiraoka S."/>
            <person name="Chiba Y."/>
            <person name="Ishida S."/>
            <person name="Ono Y."/>
            <person name="Takiguchi S."/>
            <person name="Watanabe S."/>
            <person name="Yosida M."/>
            <person name="Hotuta T."/>
            <person name="Kusano J."/>
            <person name="Kanehori K."/>
            <person name="Takahashi-Fujii A."/>
            <person name="Hara H."/>
            <person name="Tanase T.-O."/>
            <person name="Nomura Y."/>
            <person name="Togiya S."/>
            <person name="Komai F."/>
            <person name="Hara R."/>
            <person name="Takeuchi K."/>
            <person name="Arita M."/>
            <person name="Imose N."/>
            <person name="Musashino K."/>
            <person name="Yuuki H."/>
            <person name="Oshima A."/>
            <person name="Sasaki N."/>
            <person name="Aotsuka S."/>
            <person name="Yoshikawa Y."/>
            <person name="Matsunawa H."/>
            <person name="Ichihara T."/>
            <person name="Shiohata N."/>
            <person name="Sano S."/>
            <person name="Moriya S."/>
            <person name="Momiyama H."/>
            <person name="Satoh N."/>
            <person name="Takami S."/>
            <person name="Terashima Y."/>
            <person name="Suzuki O."/>
            <person name="Nakagawa S."/>
            <person name="Senoh A."/>
            <person name="Mizoguchi H."/>
            <person name="Goto Y."/>
            <person name="Shimizu F."/>
            <person name="Wakebe H."/>
            <person name="Hishigaki H."/>
            <person name="Watanabe T."/>
            <person name="Sugiyama A."/>
            <person name="Takemoto M."/>
            <person name="Kawakami B."/>
            <person name="Yamazaki M."/>
            <person name="Watanabe K."/>
            <person name="Kumagai A."/>
            <person name="Itakura S."/>
            <person name="Fukuzumi Y."/>
            <person name="Fujimori Y."/>
            <person name="Komiyama M."/>
            <person name="Tashiro H."/>
            <person name="Tanigami A."/>
            <person name="Fujiwara T."/>
            <person name="Ono T."/>
            <person name="Yamada K."/>
            <person name="Fujii Y."/>
            <person name="Ozaki K."/>
            <person name="Hirao M."/>
            <person name="Ohmori Y."/>
            <person name="Kawabata A."/>
            <person name="Hikiji T."/>
            <person name="Kobatake N."/>
            <person name="Inagaki H."/>
            <person name="Ikema Y."/>
            <person name="Okamoto S."/>
            <person name="Okitani R."/>
            <person name="Kawakami T."/>
            <person name="Noguchi S."/>
            <person name="Itoh T."/>
            <person name="Shigeta K."/>
            <person name="Senba T."/>
            <person name="Matsumura K."/>
            <person name="Nakajima Y."/>
            <person name="Mizuno T."/>
            <person name="Morinaga M."/>
            <person name="Sasaki M."/>
            <person name="Togashi T."/>
            <person name="Oyama M."/>
            <person name="Hata H."/>
            <person name="Watanabe M."/>
            <person name="Komatsu T."/>
            <person name="Mizushima-Sugano J."/>
            <person name="Satoh T."/>
            <person name="Shirai Y."/>
            <person name="Takahashi Y."/>
            <person name="Nakagawa K."/>
            <person name="Okumura K."/>
            <person name="Nagase T."/>
            <person name="Nomura N."/>
            <person name="Kikuchi H."/>
            <person name="Masuho Y."/>
            <person name="Yamashita R."/>
            <person name="Nakai K."/>
            <person name="Yada T."/>
            <person name="Nakamura Y."/>
            <person name="Ohara O."/>
            <person name="Isogai T."/>
            <person name="Sugano S."/>
        </authorList>
    </citation>
    <scope>NUCLEOTIDE SEQUENCE [LARGE SCALE MRNA]</scope>
    <source>
        <tissue>Testis</tissue>
    </source>
</reference>
<reference key="3">
    <citation type="submission" date="2005-07" db="EMBL/GenBank/DDBJ databases">
        <authorList>
            <person name="Mural R.J."/>
            <person name="Istrail S."/>
            <person name="Sutton G.G."/>
            <person name="Florea L."/>
            <person name="Halpern A.L."/>
            <person name="Mobarry C.M."/>
            <person name="Lippert R."/>
            <person name="Walenz B."/>
            <person name="Shatkay H."/>
            <person name="Dew I."/>
            <person name="Miller J.R."/>
            <person name="Flanigan M.J."/>
            <person name="Edwards N.J."/>
            <person name="Bolanos R."/>
            <person name="Fasulo D."/>
            <person name="Halldorsson B.V."/>
            <person name="Hannenhalli S."/>
            <person name="Turner R."/>
            <person name="Yooseph S."/>
            <person name="Lu F."/>
            <person name="Nusskern D.R."/>
            <person name="Shue B.C."/>
            <person name="Zheng X.H."/>
            <person name="Zhong F."/>
            <person name="Delcher A.L."/>
            <person name="Huson D.H."/>
            <person name="Kravitz S.A."/>
            <person name="Mouchard L."/>
            <person name="Reinert K."/>
            <person name="Remington K.A."/>
            <person name="Clark A.G."/>
            <person name="Waterman M.S."/>
            <person name="Eichler E.E."/>
            <person name="Adams M.D."/>
            <person name="Hunkapiller M.W."/>
            <person name="Myers E.W."/>
            <person name="Venter J.C."/>
        </authorList>
    </citation>
    <scope>NUCLEOTIDE SEQUENCE [LARGE SCALE GENOMIC DNA]</scope>
</reference>
<reference key="4">
    <citation type="journal article" date="2004" name="Genome Res.">
        <title>The status, quality, and expansion of the NIH full-length cDNA project: the Mammalian Gene Collection (MGC).</title>
        <authorList>
            <consortium name="The MGC Project Team"/>
        </authorList>
    </citation>
    <scope>NUCLEOTIDE SEQUENCE [LARGE SCALE MRNA]</scope>
    <source>
        <tissue>Brain</tissue>
    </source>
</reference>
<reference key="5">
    <citation type="journal article" date="2009" name="Biochim. Biophys. Acta">
        <title>HSPB7 is a SC35 speckle resident small heat shock protein.</title>
        <authorList>
            <person name="Vos M.J."/>
            <person name="Kanon B."/>
            <person name="Kampinga H.H."/>
        </authorList>
    </citation>
    <scope>SUBCELLULAR LOCATION</scope>
</reference>
<feature type="chain" id="PRO_0000125950" description="Heat shock protein beta-9">
    <location>
        <begin position="1"/>
        <end position="159"/>
    </location>
</feature>
<feature type="domain" description="sHSP" evidence="1">
    <location>
        <begin position="36"/>
        <end position="147"/>
    </location>
</feature>
<feature type="sequence variant" id="VAR_022054" description="In dbSNP:rs1122326.">
    <original>Q</original>
    <variation>P</variation>
    <location>
        <position position="2"/>
    </location>
</feature>
<keyword id="KW-0963">Cytoplasm</keyword>
<keyword id="KW-0539">Nucleus</keyword>
<keyword id="KW-1185">Reference proteome</keyword>
<keyword id="KW-0346">Stress response</keyword>
<name>HSPB9_HUMAN</name>
<sequence length="159" mass="17486">MQRVGNTFSNESRVASRCPSVGLAERNRVATMPVRLLRDSPAAQEDNDHARDGFQMKLDAHGFAPEELVVQVDGQWLMVTGQQQLDVRDPERVSYRMSQKVHRKMLPSNLSPTAMTCCLTPSGQLWVRGQCVALALPEAQTGPSPRLGSLGSKASNLTR</sequence>
<accession>Q9BQS6</accession>
<accession>B3KSG6</accession>
<accession>Q52LB4</accession>
<protein>
    <recommendedName>
        <fullName>Heat shock protein beta-9</fullName>
        <shortName>HspB9</shortName>
    </recommendedName>
    <alternativeName>
        <fullName>Cancer/testis antigen 51</fullName>
        <shortName>CT51</shortName>
    </alternativeName>
    <alternativeName>
        <fullName>Heat shock protein family B member 9</fullName>
    </alternativeName>
</protein>
<comment type="interaction">
    <interactant intactId="EBI-1176448">
        <id>Q9BQS6</id>
    </interactant>
    <interactant intactId="EBI-1176455">
        <id>P63172</id>
        <label>DYNLT1</label>
    </interactant>
    <organismsDiffer>false</organismsDiffer>
    <experiments>5</experiments>
</comment>
<comment type="subcellular location">
    <subcellularLocation>
        <location evidence="3">Cytoplasm</location>
    </subcellularLocation>
    <subcellularLocation>
        <location evidence="3">Nucleus</location>
    </subcellularLocation>
    <text>Translocates to nuclear foci during heat shock.</text>
</comment>
<comment type="tissue specificity">
    <text evidence="2">Testis specific.</text>
</comment>
<comment type="similarity">
    <text evidence="1">Belongs to the small heat shock protein (HSP20) family.</text>
</comment>